<sequence>MTLFEKLRCLFTFGQGVALPLPELSSNTTPDQIFEQWFADANKSGILLPEAMSVSSCNSDGQPSSRMVLLKDYDKEGFVFFTNYESRKSHELAENNKVALLFHWNVLQRQIRIEGTVEKVSIQESADYFHSRDRGSQVGAWASKQSQKLKYDDELKERMSHYQDKFSEGEVPHPEFWGGWRVKPHAIEFWQGRANRLHDRLCFEKDGETWLNHKLNP</sequence>
<feature type="chain" id="PRO_0000167699" description="Pyridoxine/pyridoxamine 5'-phosphate oxidase">
    <location>
        <begin position="1"/>
        <end position="217"/>
    </location>
</feature>
<feature type="binding site" evidence="1">
    <location>
        <begin position="66"/>
        <end position="71"/>
    </location>
    <ligand>
        <name>FMN</name>
        <dbReference type="ChEBI" id="CHEBI:58210"/>
    </ligand>
</feature>
<feature type="binding site" evidence="1">
    <location>
        <position position="71"/>
    </location>
    <ligand>
        <name>substrate</name>
    </ligand>
</feature>
<feature type="binding site" evidence="1">
    <location>
        <begin position="81"/>
        <end position="82"/>
    </location>
    <ligand>
        <name>FMN</name>
        <dbReference type="ChEBI" id="CHEBI:58210"/>
    </ligand>
</feature>
<feature type="binding site" evidence="1">
    <location>
        <position position="87"/>
    </location>
    <ligand>
        <name>FMN</name>
        <dbReference type="ChEBI" id="CHEBI:58210"/>
    </ligand>
</feature>
<feature type="binding site" evidence="1">
    <location>
        <position position="88"/>
    </location>
    <ligand>
        <name>FMN</name>
        <dbReference type="ChEBI" id="CHEBI:58210"/>
    </ligand>
</feature>
<feature type="binding site" evidence="1">
    <location>
        <position position="110"/>
    </location>
    <ligand>
        <name>FMN</name>
        <dbReference type="ChEBI" id="CHEBI:58210"/>
    </ligand>
</feature>
<feature type="binding site" evidence="1">
    <location>
        <position position="128"/>
    </location>
    <ligand>
        <name>substrate</name>
    </ligand>
</feature>
<feature type="binding site" evidence="1">
    <location>
        <position position="132"/>
    </location>
    <ligand>
        <name>substrate</name>
    </ligand>
</feature>
<feature type="binding site" evidence="1">
    <location>
        <position position="136"/>
    </location>
    <ligand>
        <name>substrate</name>
    </ligand>
</feature>
<feature type="binding site" evidence="1">
    <location>
        <begin position="145"/>
        <end position="146"/>
    </location>
    <ligand>
        <name>FMN</name>
        <dbReference type="ChEBI" id="CHEBI:58210"/>
    </ligand>
</feature>
<feature type="binding site" evidence="1">
    <location>
        <position position="190"/>
    </location>
    <ligand>
        <name>FMN</name>
        <dbReference type="ChEBI" id="CHEBI:58210"/>
    </ligand>
</feature>
<feature type="binding site" evidence="1">
    <location>
        <begin position="196"/>
        <end position="198"/>
    </location>
    <ligand>
        <name>substrate</name>
    </ligand>
</feature>
<feature type="binding site" evidence="1">
    <location>
        <position position="200"/>
    </location>
    <ligand>
        <name>FMN</name>
        <dbReference type="ChEBI" id="CHEBI:58210"/>
    </ligand>
</feature>
<evidence type="ECO:0000255" key="1">
    <source>
        <dbReference type="HAMAP-Rule" id="MF_01629"/>
    </source>
</evidence>
<organism>
    <name type="scientific">Colwellia psychrerythraea (strain 34H / ATCC BAA-681)</name>
    <name type="common">Vibrio psychroerythus</name>
    <dbReference type="NCBI Taxonomy" id="167879"/>
    <lineage>
        <taxon>Bacteria</taxon>
        <taxon>Pseudomonadati</taxon>
        <taxon>Pseudomonadota</taxon>
        <taxon>Gammaproteobacteria</taxon>
        <taxon>Alteromonadales</taxon>
        <taxon>Colwelliaceae</taxon>
        <taxon>Colwellia</taxon>
    </lineage>
</organism>
<protein>
    <recommendedName>
        <fullName evidence="1">Pyridoxine/pyridoxamine 5'-phosphate oxidase</fullName>
        <ecNumber evidence="1">1.4.3.5</ecNumber>
    </recommendedName>
    <alternativeName>
        <fullName evidence="1">PNP/PMP oxidase</fullName>
        <shortName evidence="1">PNPOx</shortName>
    </alternativeName>
    <alternativeName>
        <fullName evidence="1">Pyridoxal 5'-phosphate synthase</fullName>
    </alternativeName>
</protein>
<gene>
    <name evidence="1" type="primary">pdxH</name>
    <name type="ordered locus">CPS_1053</name>
</gene>
<dbReference type="EC" id="1.4.3.5" evidence="1"/>
<dbReference type="EMBL" id="CP000083">
    <property type="protein sequence ID" value="AAZ28207.1"/>
    <property type="molecule type" value="Genomic_DNA"/>
</dbReference>
<dbReference type="RefSeq" id="WP_011041891.1">
    <property type="nucleotide sequence ID" value="NC_003910.7"/>
</dbReference>
<dbReference type="SMR" id="Q487G8"/>
<dbReference type="STRING" id="167879.CPS_1053"/>
<dbReference type="KEGG" id="cps:CPS_1053"/>
<dbReference type="eggNOG" id="COG0259">
    <property type="taxonomic scope" value="Bacteria"/>
</dbReference>
<dbReference type="HOGENOM" id="CLU_032263_2_2_6"/>
<dbReference type="UniPathway" id="UPA01068">
    <property type="reaction ID" value="UER00304"/>
</dbReference>
<dbReference type="UniPathway" id="UPA01068">
    <property type="reaction ID" value="UER00305"/>
</dbReference>
<dbReference type="Proteomes" id="UP000000547">
    <property type="component" value="Chromosome"/>
</dbReference>
<dbReference type="GO" id="GO:0010181">
    <property type="term" value="F:FMN binding"/>
    <property type="evidence" value="ECO:0007669"/>
    <property type="project" value="UniProtKB-UniRule"/>
</dbReference>
<dbReference type="GO" id="GO:0004733">
    <property type="term" value="F:pyridoxamine phosphate oxidase activity"/>
    <property type="evidence" value="ECO:0007669"/>
    <property type="project" value="UniProtKB-UniRule"/>
</dbReference>
<dbReference type="GO" id="GO:0008615">
    <property type="term" value="P:pyridoxine biosynthetic process"/>
    <property type="evidence" value="ECO:0007669"/>
    <property type="project" value="UniProtKB-KW"/>
</dbReference>
<dbReference type="Gene3D" id="2.30.110.10">
    <property type="entry name" value="Electron Transport, Fmn-binding Protein, Chain A"/>
    <property type="match status" value="1"/>
</dbReference>
<dbReference type="HAMAP" id="MF_01629">
    <property type="entry name" value="PdxH"/>
    <property type="match status" value="1"/>
</dbReference>
<dbReference type="InterPro" id="IPR000659">
    <property type="entry name" value="Pyridox_Oxase"/>
</dbReference>
<dbReference type="InterPro" id="IPR019740">
    <property type="entry name" value="Pyridox_Oxase_CS"/>
</dbReference>
<dbReference type="InterPro" id="IPR011576">
    <property type="entry name" value="Pyridox_Oxase_N"/>
</dbReference>
<dbReference type="InterPro" id="IPR019576">
    <property type="entry name" value="Pyridoxamine_oxidase_dimer_C"/>
</dbReference>
<dbReference type="InterPro" id="IPR012349">
    <property type="entry name" value="Split_barrel_FMN-bd"/>
</dbReference>
<dbReference type="NCBIfam" id="TIGR00558">
    <property type="entry name" value="pdxH"/>
    <property type="match status" value="1"/>
</dbReference>
<dbReference type="NCBIfam" id="NF004231">
    <property type="entry name" value="PRK05679.1"/>
    <property type="match status" value="1"/>
</dbReference>
<dbReference type="PANTHER" id="PTHR10851:SF0">
    <property type="entry name" value="PYRIDOXINE-5'-PHOSPHATE OXIDASE"/>
    <property type="match status" value="1"/>
</dbReference>
<dbReference type="PANTHER" id="PTHR10851">
    <property type="entry name" value="PYRIDOXINE-5-PHOSPHATE OXIDASE"/>
    <property type="match status" value="1"/>
</dbReference>
<dbReference type="Pfam" id="PF10590">
    <property type="entry name" value="PNP_phzG_C"/>
    <property type="match status" value="1"/>
</dbReference>
<dbReference type="Pfam" id="PF01243">
    <property type="entry name" value="PNPOx_N"/>
    <property type="match status" value="1"/>
</dbReference>
<dbReference type="PIRSF" id="PIRSF000190">
    <property type="entry name" value="Pyd_amn-ph_oxd"/>
    <property type="match status" value="1"/>
</dbReference>
<dbReference type="SUPFAM" id="SSF50475">
    <property type="entry name" value="FMN-binding split barrel"/>
    <property type="match status" value="1"/>
</dbReference>
<dbReference type="PROSITE" id="PS01064">
    <property type="entry name" value="PYRIDOX_OXIDASE"/>
    <property type="match status" value="1"/>
</dbReference>
<comment type="function">
    <text evidence="1">Catalyzes the oxidation of either pyridoxine 5'-phosphate (PNP) or pyridoxamine 5'-phosphate (PMP) into pyridoxal 5'-phosphate (PLP).</text>
</comment>
<comment type="catalytic activity">
    <reaction evidence="1">
        <text>pyridoxamine 5'-phosphate + O2 + H2O = pyridoxal 5'-phosphate + H2O2 + NH4(+)</text>
        <dbReference type="Rhea" id="RHEA:15817"/>
        <dbReference type="ChEBI" id="CHEBI:15377"/>
        <dbReference type="ChEBI" id="CHEBI:15379"/>
        <dbReference type="ChEBI" id="CHEBI:16240"/>
        <dbReference type="ChEBI" id="CHEBI:28938"/>
        <dbReference type="ChEBI" id="CHEBI:58451"/>
        <dbReference type="ChEBI" id="CHEBI:597326"/>
        <dbReference type="EC" id="1.4.3.5"/>
    </reaction>
</comment>
<comment type="catalytic activity">
    <reaction evidence="1">
        <text>pyridoxine 5'-phosphate + O2 = pyridoxal 5'-phosphate + H2O2</text>
        <dbReference type="Rhea" id="RHEA:15149"/>
        <dbReference type="ChEBI" id="CHEBI:15379"/>
        <dbReference type="ChEBI" id="CHEBI:16240"/>
        <dbReference type="ChEBI" id="CHEBI:58589"/>
        <dbReference type="ChEBI" id="CHEBI:597326"/>
        <dbReference type="EC" id="1.4.3.5"/>
    </reaction>
</comment>
<comment type="cofactor">
    <cofactor evidence="1">
        <name>FMN</name>
        <dbReference type="ChEBI" id="CHEBI:58210"/>
    </cofactor>
    <text evidence="1">Binds 1 FMN per subunit.</text>
</comment>
<comment type="pathway">
    <text evidence="1">Cofactor metabolism; pyridoxal 5'-phosphate salvage; pyridoxal 5'-phosphate from pyridoxamine 5'-phosphate: step 1/1.</text>
</comment>
<comment type="pathway">
    <text evidence="1">Cofactor metabolism; pyridoxal 5'-phosphate salvage; pyridoxal 5'-phosphate from pyridoxine 5'-phosphate: step 1/1.</text>
</comment>
<comment type="subunit">
    <text evidence="1">Homodimer.</text>
</comment>
<comment type="similarity">
    <text evidence="1">Belongs to the pyridoxamine 5'-phosphate oxidase family.</text>
</comment>
<accession>Q487G8</accession>
<name>PDXH_COLP3</name>
<keyword id="KW-0285">Flavoprotein</keyword>
<keyword id="KW-0288">FMN</keyword>
<keyword id="KW-0560">Oxidoreductase</keyword>
<keyword id="KW-0664">Pyridoxine biosynthesis</keyword>
<proteinExistence type="inferred from homology"/>
<reference key="1">
    <citation type="journal article" date="2005" name="Proc. Natl. Acad. Sci. U.S.A.">
        <title>The psychrophilic lifestyle as revealed by the genome sequence of Colwellia psychrerythraea 34H through genomic and proteomic analyses.</title>
        <authorList>
            <person name="Methe B.A."/>
            <person name="Nelson K.E."/>
            <person name="Deming J.W."/>
            <person name="Momen B."/>
            <person name="Melamud E."/>
            <person name="Zhang X."/>
            <person name="Moult J."/>
            <person name="Madupu R."/>
            <person name="Nelson W.C."/>
            <person name="Dodson R.J."/>
            <person name="Brinkac L.M."/>
            <person name="Daugherty S.C."/>
            <person name="Durkin A.S."/>
            <person name="DeBoy R.T."/>
            <person name="Kolonay J.F."/>
            <person name="Sullivan S.A."/>
            <person name="Zhou L."/>
            <person name="Davidsen T.M."/>
            <person name="Wu M."/>
            <person name="Huston A.L."/>
            <person name="Lewis M."/>
            <person name="Weaver B."/>
            <person name="Weidman J.F."/>
            <person name="Khouri H."/>
            <person name="Utterback T.R."/>
            <person name="Feldblyum T.V."/>
            <person name="Fraser C.M."/>
        </authorList>
    </citation>
    <scope>NUCLEOTIDE SEQUENCE [LARGE SCALE GENOMIC DNA]</scope>
    <source>
        <strain>34H / ATCC BAA-681</strain>
    </source>
</reference>